<accession>P13597</accession>
<accession>Q61828</accession>
<gene>
    <name type="primary">Icam1</name>
    <name type="synonym">Icam-1</name>
</gene>
<protein>
    <recommendedName>
        <fullName>Intercellular adhesion molecule 1</fullName>
        <shortName>ICAM-1</shortName>
    </recommendedName>
    <alternativeName>
        <fullName>MALA-2</fullName>
    </alternativeName>
    <alternativeName>
        <fullName>MyD10</fullName>
    </alternativeName>
    <cdAntigenName>CD54</cdAntigenName>
</protein>
<evidence type="ECO:0000250" key="1"/>
<evidence type="ECO:0000250" key="2">
    <source>
        <dbReference type="UniProtKB" id="P05362"/>
    </source>
</evidence>
<evidence type="ECO:0000255" key="3"/>
<evidence type="ECO:0000255" key="4">
    <source>
        <dbReference type="PROSITE-ProRule" id="PRU00114"/>
    </source>
</evidence>
<evidence type="ECO:0000269" key="5">
    <source>
    </source>
</evidence>
<evidence type="ECO:0000269" key="6">
    <source>
    </source>
</evidence>
<evidence type="ECO:0000269" key="7">
    <source>
    </source>
</evidence>
<evidence type="ECO:0000305" key="8"/>
<name>ICAM1_MOUSE</name>
<reference key="1">
    <citation type="journal article" date="1989" name="EMBO J.">
        <title>Molecular cloning of murine intercellular adhesion molecule (ICAM-1).</title>
        <authorList>
            <person name="Horley K.J."/>
            <person name="Carpenito C."/>
            <person name="Baker B."/>
            <person name="Takei F."/>
        </authorList>
    </citation>
    <scope>NUCLEOTIDE SEQUENCE [MRNA]</scope>
    <scope>PARTIAL PROTEIN SEQUENCE</scope>
    <source>
        <strain>BALB/cJ</strain>
        <tissue>Myeloma</tissue>
    </source>
</reference>
<reference key="2">
    <citation type="submission" date="1990-04" db="EMBL/GenBank/DDBJ databases">
        <authorList>
            <person name="Takei F."/>
        </authorList>
    </citation>
    <scope>SEQUENCE REVISION</scope>
</reference>
<reference key="3">
    <citation type="journal article" date="1989" name="J. Immunol.">
        <title>Isolation of the murine intercellular adhesion molecule 1 (ICAM-1) gene. ICAM-1 enhances antigen-specific T cell activation.</title>
        <authorList>
            <person name="Siu G."/>
            <person name="Hedrick S.M."/>
            <person name="Brian A.A."/>
        </authorList>
    </citation>
    <scope>NUCLEOTIDE SEQUENCE [MRNA]</scope>
</reference>
<reference key="4">
    <citation type="journal article" date="1989" name="Nucleic Acids Res.">
        <title>Nucleotide sequence of the cDNA for murine intercellular adhesion molecule-1 (ICAM-1).</title>
        <authorList>
            <person name="Ballantyne C.M."/>
            <person name="O'Brien W.E."/>
            <person name="Beaudet A.L."/>
        </authorList>
    </citation>
    <scope>NUCLEOTIDE SEQUENCE [MRNA]</scope>
    <source>
        <strain>C57BL/6 X CBA</strain>
        <tissue>Thymus</tissue>
    </source>
</reference>
<reference key="5">
    <citation type="journal article" date="1992" name="Genomics">
        <title>Characterization of the murine Icam-1 gene.</title>
        <authorList>
            <person name="Ballantyne C.M."/>
            <person name="Sligh J.E."/>
            <person name="Dai X.Y."/>
            <person name="Beaudet A.L."/>
        </authorList>
    </citation>
    <scope>NUCLEOTIDE SEQUENCE [GENOMIC DNA]</scope>
    <source>
        <strain>NIH Swiss</strain>
    </source>
</reference>
<reference key="6">
    <citation type="journal article" date="1990" name="Oncogene">
        <title>Complexity of the immediate early response of myeloid cells to terminal differentiation and growth arrest includes ICAM-1, Jun-B and histone variants.</title>
        <authorList>
            <person name="Lord K.A."/>
            <person name="Hoffman-Liebermann B."/>
            <person name="Liebermann D.A."/>
        </authorList>
    </citation>
    <scope>NUCLEOTIDE SEQUENCE [MRNA] OF 4-131</scope>
</reference>
<reference key="7">
    <citation type="journal article" date="1997" name="Proc. Natl. Acad. Sci. U.S.A.">
        <title>A new class of obesity genes encodes leukocyte adhesion receptors.</title>
        <authorList>
            <person name="Dong Z.M."/>
            <person name="Gutierrez-Ramos J.C."/>
            <person name="Coxon A."/>
            <person name="Mayadas T.N."/>
            <person name="Wagner D.D."/>
        </authorList>
    </citation>
    <scope>DISRUPTION PHENOTYPE</scope>
</reference>
<reference key="8">
    <citation type="journal article" date="2006" name="Glycobiology">
        <title>N-glycan structures and N-glycosylation sites of mouse soluble intercellular adhesion molecule-1 revealed by MALDI-TOF and FTICR mass spectrometry.</title>
        <authorList>
            <person name="Otto V.I."/>
            <person name="Damoc E."/>
            <person name="Cueni L.N."/>
            <person name="Schurpf T."/>
            <person name="Frei R."/>
            <person name="Ali S."/>
            <person name="Callewaert N."/>
            <person name="Moise A."/>
            <person name="Leary J.A."/>
            <person name="Folkers G."/>
            <person name="Przybylski M."/>
        </authorList>
    </citation>
    <scope>GLYCOSYLATION AT ASN-47; ASN-185; ASN-204; ASN-267; ASN-311; ASN-362; ASN-388; ASN-409 AND ASN-456</scope>
    <scope>LACK OF GLYCOSYLATION AT ASN-469 AND ASN-485</scope>
    <scope>IDENTIFICATION BY MASS SPECTROMETRY</scope>
</reference>
<reference key="9">
    <citation type="journal article" date="2009" name="Nat. Biotechnol.">
        <title>Mass-spectrometric identification and relative quantification of N-linked cell surface glycoproteins.</title>
        <authorList>
            <person name="Wollscheid B."/>
            <person name="Bausch-Fluck D."/>
            <person name="Henderson C."/>
            <person name="O'Brien R."/>
            <person name="Bibel M."/>
            <person name="Schiess R."/>
            <person name="Aebersold R."/>
            <person name="Watts J.D."/>
        </authorList>
    </citation>
    <scope>GLYCOSYLATION [LARGE SCALE ANALYSIS] AT ASN-185; ASN-204; ASN-362; ASN-388; ASN-409 AND ASN-469</scope>
</reference>
<reference key="10">
    <citation type="journal article" date="2010" name="Cell">
        <title>A tissue-specific atlas of mouse protein phosphorylation and expression.</title>
        <authorList>
            <person name="Huttlin E.L."/>
            <person name="Jedrychowski M.P."/>
            <person name="Elias J.E."/>
            <person name="Goswami T."/>
            <person name="Rad R."/>
            <person name="Beausoleil S.A."/>
            <person name="Villen J."/>
            <person name="Haas W."/>
            <person name="Sowa M.E."/>
            <person name="Gygi S.P."/>
        </authorList>
    </citation>
    <scope>IDENTIFICATION BY MASS SPECTROMETRY [LARGE SCALE ANALYSIS]</scope>
    <source>
        <tissue>Heart</tissue>
        <tissue>Kidney</tissue>
        <tissue>Liver</tissue>
        <tissue>Lung</tissue>
        <tissue>Spleen</tissue>
        <tissue>Testis</tissue>
    </source>
</reference>
<organism>
    <name type="scientific">Mus musculus</name>
    <name type="common">Mouse</name>
    <dbReference type="NCBI Taxonomy" id="10090"/>
    <lineage>
        <taxon>Eukaryota</taxon>
        <taxon>Metazoa</taxon>
        <taxon>Chordata</taxon>
        <taxon>Craniata</taxon>
        <taxon>Vertebrata</taxon>
        <taxon>Euteleostomi</taxon>
        <taxon>Mammalia</taxon>
        <taxon>Eutheria</taxon>
        <taxon>Euarchontoglires</taxon>
        <taxon>Glires</taxon>
        <taxon>Rodentia</taxon>
        <taxon>Myomorpha</taxon>
        <taxon>Muroidea</taxon>
        <taxon>Muridae</taxon>
        <taxon>Murinae</taxon>
        <taxon>Mus</taxon>
        <taxon>Mus</taxon>
    </lineage>
</organism>
<dbReference type="EMBL" id="X16624">
    <property type="protein sequence ID" value="CAA34621.1"/>
    <property type="molecule type" value="mRNA"/>
</dbReference>
<dbReference type="EMBL" id="X16625">
    <property type="protein sequence ID" value="CAA34622.1"/>
    <property type="molecule type" value="mRNA"/>
</dbReference>
<dbReference type="EMBL" id="M31585">
    <property type="protein sequence ID" value="AAA37876.1"/>
    <property type="molecule type" value="mRNA"/>
</dbReference>
<dbReference type="EMBL" id="X52264">
    <property type="protein sequence ID" value="CAA36507.1"/>
    <property type="molecule type" value="mRNA"/>
</dbReference>
<dbReference type="EMBL" id="M90551">
    <property type="protein sequence ID" value="AAA37875.1"/>
    <property type="molecule type" value="Genomic_DNA"/>
</dbReference>
<dbReference type="EMBL" id="M90546">
    <property type="protein sequence ID" value="AAA37875.1"/>
    <property type="status" value="JOINED"/>
    <property type="molecule type" value="Genomic_DNA"/>
</dbReference>
<dbReference type="EMBL" id="M90547">
    <property type="protein sequence ID" value="AAA37875.1"/>
    <property type="status" value="JOINED"/>
    <property type="molecule type" value="Genomic_DNA"/>
</dbReference>
<dbReference type="EMBL" id="M90548">
    <property type="protein sequence ID" value="AAA37875.1"/>
    <property type="status" value="JOINED"/>
    <property type="molecule type" value="Genomic_DNA"/>
</dbReference>
<dbReference type="EMBL" id="M90549">
    <property type="protein sequence ID" value="AAA37875.1"/>
    <property type="status" value="JOINED"/>
    <property type="molecule type" value="Genomic_DNA"/>
</dbReference>
<dbReference type="EMBL" id="M90550">
    <property type="protein sequence ID" value="AAA37875.1"/>
    <property type="status" value="JOINED"/>
    <property type="molecule type" value="Genomic_DNA"/>
</dbReference>
<dbReference type="EMBL" id="X54331">
    <property type="status" value="NOT_ANNOTATED_CDS"/>
    <property type="molecule type" value="mRNA"/>
</dbReference>
<dbReference type="CCDS" id="CCDS22889.1">
    <molecule id="P13597-1"/>
</dbReference>
<dbReference type="PIR" id="A45815">
    <property type="entry name" value="A45815"/>
</dbReference>
<dbReference type="PIR" id="I49769">
    <property type="entry name" value="I49769"/>
</dbReference>
<dbReference type="PIR" id="S06016">
    <property type="entry name" value="S06016"/>
</dbReference>
<dbReference type="RefSeq" id="NP_034623.1">
    <molecule id="P13597-1"/>
    <property type="nucleotide sequence ID" value="NM_010493.3"/>
</dbReference>
<dbReference type="SMR" id="P13597"/>
<dbReference type="DIP" id="DIP-29096N"/>
<dbReference type="FunCoup" id="P13597">
    <property type="interactions" value="578"/>
</dbReference>
<dbReference type="IntAct" id="P13597">
    <property type="interactions" value="1"/>
</dbReference>
<dbReference type="STRING" id="10090.ENSMUSP00000083587"/>
<dbReference type="GlyCosmos" id="P13597">
    <property type="glycosylation" value="10 sites, No reported glycans"/>
</dbReference>
<dbReference type="GlyGen" id="P13597">
    <property type="glycosylation" value="10 sites, 6 N-linked glycans (6 sites)"/>
</dbReference>
<dbReference type="iPTMnet" id="P13597"/>
<dbReference type="PhosphoSitePlus" id="P13597"/>
<dbReference type="CPTAC" id="non-CPTAC-3362"/>
<dbReference type="jPOST" id="P13597"/>
<dbReference type="PaxDb" id="10090-ENSMUSP00000083587"/>
<dbReference type="PeptideAtlas" id="P13597"/>
<dbReference type="ProteomicsDB" id="269522">
    <molecule id="P13597-1"/>
</dbReference>
<dbReference type="ProteomicsDB" id="269523">
    <molecule id="P13597-2"/>
</dbReference>
<dbReference type="Antibodypedia" id="795">
    <property type="antibodies" value="3248 antibodies from 54 providers"/>
</dbReference>
<dbReference type="DNASU" id="15894"/>
<dbReference type="Ensembl" id="ENSMUST00000086399.6">
    <molecule id="P13597-1"/>
    <property type="protein sequence ID" value="ENSMUSP00000083587.5"/>
    <property type="gene ID" value="ENSMUSG00000037405.9"/>
</dbReference>
<dbReference type="GeneID" id="15894"/>
<dbReference type="KEGG" id="mmu:15894"/>
<dbReference type="UCSC" id="uc009ojx.1">
    <molecule id="P13597-1"/>
    <property type="organism name" value="mouse"/>
</dbReference>
<dbReference type="AGR" id="MGI:96392"/>
<dbReference type="CTD" id="3383"/>
<dbReference type="MGI" id="MGI:96392">
    <property type="gene designation" value="Icam1"/>
</dbReference>
<dbReference type="VEuPathDB" id="HostDB:ENSMUSG00000037405"/>
<dbReference type="eggNOG" id="ENOG502S45R">
    <property type="taxonomic scope" value="Eukaryota"/>
</dbReference>
<dbReference type="GeneTree" id="ENSGT00940000162311"/>
<dbReference type="HOGENOM" id="CLU_036160_1_1_1"/>
<dbReference type="InParanoid" id="P13597"/>
<dbReference type="OMA" id="NLTVYWF"/>
<dbReference type="OrthoDB" id="6250964at2759"/>
<dbReference type="PhylomeDB" id="P13597"/>
<dbReference type="TreeFam" id="TF333745"/>
<dbReference type="Reactome" id="R-MMU-198933">
    <property type="pathway name" value="Immunoregulatory interactions between a Lymphoid and a non-Lymphoid cell"/>
</dbReference>
<dbReference type="Reactome" id="R-MMU-216083">
    <property type="pathway name" value="Integrin cell surface interactions"/>
</dbReference>
<dbReference type="BioGRID-ORCS" id="15894">
    <property type="hits" value="5 hits in 80 CRISPR screens"/>
</dbReference>
<dbReference type="ChiTaRS" id="Icam1">
    <property type="organism name" value="mouse"/>
</dbReference>
<dbReference type="PRO" id="PR:P13597"/>
<dbReference type="Proteomes" id="UP000000589">
    <property type="component" value="Chromosome 9"/>
</dbReference>
<dbReference type="RNAct" id="P13597">
    <property type="molecule type" value="protein"/>
</dbReference>
<dbReference type="Bgee" id="ENSMUSG00000037405">
    <property type="expression patterns" value="Expressed in right lung lobe and 191 other cell types or tissues"/>
</dbReference>
<dbReference type="ExpressionAtlas" id="P13597">
    <property type="expression patterns" value="baseline and differential"/>
</dbReference>
<dbReference type="GO" id="GO:0009897">
    <property type="term" value="C:external side of plasma membrane"/>
    <property type="evidence" value="ECO:0000314"/>
    <property type="project" value="MGI"/>
</dbReference>
<dbReference type="GO" id="GO:0070062">
    <property type="term" value="C:extracellular exosome"/>
    <property type="evidence" value="ECO:0007669"/>
    <property type="project" value="Ensembl"/>
</dbReference>
<dbReference type="GO" id="GO:0001772">
    <property type="term" value="C:immunological synapse"/>
    <property type="evidence" value="ECO:0000314"/>
    <property type="project" value="UniProtKB"/>
</dbReference>
<dbReference type="GO" id="GO:0005178">
    <property type="term" value="F:integrin binding"/>
    <property type="evidence" value="ECO:0000266"/>
    <property type="project" value="MGI"/>
</dbReference>
<dbReference type="GO" id="GO:0007155">
    <property type="term" value="P:cell adhesion"/>
    <property type="evidence" value="ECO:0000314"/>
    <property type="project" value="MGI"/>
</dbReference>
<dbReference type="GO" id="GO:0033627">
    <property type="term" value="P:cell adhesion mediated by integrin"/>
    <property type="evidence" value="ECO:0000314"/>
    <property type="project" value="MGI"/>
</dbReference>
<dbReference type="GO" id="GO:1904646">
    <property type="term" value="P:cellular response to amyloid-beta"/>
    <property type="evidence" value="ECO:0007669"/>
    <property type="project" value="Ensembl"/>
</dbReference>
<dbReference type="GO" id="GO:0071333">
    <property type="term" value="P:cellular response to glucose stimulus"/>
    <property type="evidence" value="ECO:0000314"/>
    <property type="project" value="MGI"/>
</dbReference>
<dbReference type="GO" id="GO:1990830">
    <property type="term" value="P:cellular response to leukemia inhibitory factor"/>
    <property type="evidence" value="ECO:0000270"/>
    <property type="project" value="MGI"/>
</dbReference>
<dbReference type="GO" id="GO:0061028">
    <property type="term" value="P:establishment of endothelial barrier"/>
    <property type="evidence" value="ECO:0007669"/>
    <property type="project" value="Ensembl"/>
</dbReference>
<dbReference type="GO" id="GO:0007159">
    <property type="term" value="P:leukocyte cell-cell adhesion"/>
    <property type="evidence" value="ECO:0000315"/>
    <property type="project" value="MGI"/>
</dbReference>
<dbReference type="GO" id="GO:0022614">
    <property type="term" value="P:membrane to membrane docking"/>
    <property type="evidence" value="ECO:0007669"/>
    <property type="project" value="Ensembl"/>
</dbReference>
<dbReference type="GO" id="GO:2000352">
    <property type="term" value="P:negative regulation of endothelial cell apoptotic process"/>
    <property type="evidence" value="ECO:0007669"/>
    <property type="project" value="Ensembl"/>
</dbReference>
<dbReference type="GO" id="GO:1902042">
    <property type="term" value="P:negative regulation of extrinsic apoptotic signaling pathway via death domain receptors"/>
    <property type="evidence" value="ECO:0007669"/>
    <property type="project" value="Ensembl"/>
</dbReference>
<dbReference type="GO" id="GO:0002693">
    <property type="term" value="P:positive regulation of cellular extravasation"/>
    <property type="evidence" value="ECO:0007669"/>
    <property type="project" value="Ensembl"/>
</dbReference>
<dbReference type="GO" id="GO:0070374">
    <property type="term" value="P:positive regulation of ERK1 and ERK2 cascade"/>
    <property type="evidence" value="ECO:0007669"/>
    <property type="project" value="Ensembl"/>
</dbReference>
<dbReference type="GO" id="GO:0046813">
    <property type="term" value="P:receptor-mediated virion attachment to host cell"/>
    <property type="evidence" value="ECO:0007669"/>
    <property type="project" value="Ensembl"/>
</dbReference>
<dbReference type="GO" id="GO:1900027">
    <property type="term" value="P:regulation of ruffle assembly"/>
    <property type="evidence" value="ECO:0000314"/>
    <property type="project" value="MGI"/>
</dbReference>
<dbReference type="GO" id="GO:0002291">
    <property type="term" value="P:T cell activation via T cell receptor contact with antigen bound to MHC molecule on antigen presenting cell"/>
    <property type="evidence" value="ECO:0007669"/>
    <property type="project" value="Ensembl"/>
</dbReference>
<dbReference type="GO" id="GO:0002457">
    <property type="term" value="P:T cell antigen processing and presentation"/>
    <property type="evidence" value="ECO:0000314"/>
    <property type="project" value="MGI"/>
</dbReference>
<dbReference type="GO" id="GO:0072683">
    <property type="term" value="P:T cell extravasation"/>
    <property type="evidence" value="ECO:0000315"/>
    <property type="project" value="MGI"/>
</dbReference>
<dbReference type="CDD" id="cd05755">
    <property type="entry name" value="IgC2_2_ICAM-1_like"/>
    <property type="match status" value="1"/>
</dbReference>
<dbReference type="CDD" id="cd20996">
    <property type="entry name" value="IgI_N_ICAM-1"/>
    <property type="match status" value="1"/>
</dbReference>
<dbReference type="FunFam" id="2.60.40.10:FF:000194">
    <property type="entry name" value="Intercellular adhesion molecule 1"/>
    <property type="match status" value="1"/>
</dbReference>
<dbReference type="FunFam" id="2.60.40.10:FF:000459">
    <property type="entry name" value="Intercellular adhesion molecule 1"/>
    <property type="match status" value="1"/>
</dbReference>
<dbReference type="FunFam" id="2.60.40.10:FF:000641">
    <property type="entry name" value="Intercellular adhesion molecule 1"/>
    <property type="match status" value="1"/>
</dbReference>
<dbReference type="FunFam" id="2.60.40.10:FF:000648">
    <property type="entry name" value="Intercellular adhesion molecule 1"/>
    <property type="match status" value="1"/>
</dbReference>
<dbReference type="FunFam" id="2.60.40.10:FF:000338">
    <property type="entry name" value="intercellular adhesion molecule 5"/>
    <property type="match status" value="1"/>
</dbReference>
<dbReference type="Gene3D" id="2.60.40.10">
    <property type="entry name" value="Immunoglobulins"/>
    <property type="match status" value="5"/>
</dbReference>
<dbReference type="InterPro" id="IPR003988">
    <property type="entry name" value="ICAM"/>
</dbReference>
<dbReference type="InterPro" id="IPR048679">
    <property type="entry name" value="ICAM1_3_5_D2"/>
</dbReference>
<dbReference type="InterPro" id="IPR013768">
    <property type="entry name" value="ICAM_N"/>
</dbReference>
<dbReference type="InterPro" id="IPR047012">
    <property type="entry name" value="ICAM_VCAM"/>
</dbReference>
<dbReference type="InterPro" id="IPR003987">
    <property type="entry name" value="ICAM_VCAM_N"/>
</dbReference>
<dbReference type="InterPro" id="IPR007110">
    <property type="entry name" value="Ig-like_dom"/>
</dbReference>
<dbReference type="InterPro" id="IPR036179">
    <property type="entry name" value="Ig-like_dom_sf"/>
</dbReference>
<dbReference type="InterPro" id="IPR013783">
    <property type="entry name" value="Ig-like_fold"/>
</dbReference>
<dbReference type="InterPro" id="IPR003599">
    <property type="entry name" value="Ig_sub"/>
</dbReference>
<dbReference type="PANTHER" id="PTHR13771">
    <property type="entry name" value="INTERCELLULAR ADHESION MOLECULE"/>
    <property type="match status" value="1"/>
</dbReference>
<dbReference type="PANTHER" id="PTHR13771:SF18">
    <property type="entry name" value="INTERCELLULAR ADHESION MOLECULE 1"/>
    <property type="match status" value="1"/>
</dbReference>
<dbReference type="Pfam" id="PF21146">
    <property type="entry name" value="ICAM1_3_5_D2"/>
    <property type="match status" value="1"/>
</dbReference>
<dbReference type="Pfam" id="PF03921">
    <property type="entry name" value="ICAM_N"/>
    <property type="match status" value="1"/>
</dbReference>
<dbReference type="Pfam" id="PF13895">
    <property type="entry name" value="Ig_2"/>
    <property type="match status" value="1"/>
</dbReference>
<dbReference type="PRINTS" id="PR01473">
    <property type="entry name" value="ICAM"/>
</dbReference>
<dbReference type="PRINTS" id="PR01472">
    <property type="entry name" value="ICAMVCAM1"/>
</dbReference>
<dbReference type="SMART" id="SM00409">
    <property type="entry name" value="IG"/>
    <property type="match status" value="4"/>
</dbReference>
<dbReference type="SUPFAM" id="SSF48726">
    <property type="entry name" value="Immunoglobulin"/>
    <property type="match status" value="5"/>
</dbReference>
<dbReference type="PROSITE" id="PS50835">
    <property type="entry name" value="IG_LIKE"/>
    <property type="match status" value="1"/>
</dbReference>
<feature type="signal peptide" evidence="1">
    <location>
        <begin position="1"/>
        <end position="27"/>
    </location>
</feature>
<feature type="chain" id="PRO_0000014785" description="Intercellular adhesion molecule 1">
    <location>
        <begin position="28"/>
        <end position="537"/>
    </location>
</feature>
<feature type="topological domain" description="Extracellular" evidence="3">
    <location>
        <begin position="28"/>
        <end position="485"/>
    </location>
</feature>
<feature type="transmembrane region" description="Helical" evidence="3">
    <location>
        <begin position="486"/>
        <end position="509"/>
    </location>
</feature>
<feature type="topological domain" description="Cytoplasmic" evidence="3">
    <location>
        <begin position="510"/>
        <end position="537"/>
    </location>
</feature>
<feature type="domain" description="Ig-like C2-type 1">
    <location>
        <begin position="41"/>
        <end position="102"/>
    </location>
</feature>
<feature type="domain" description="Ig-like C2-type 2">
    <location>
        <begin position="127"/>
        <end position="195"/>
    </location>
</feature>
<feature type="domain" description="Ig-like C2-type 3">
    <location>
        <begin position="232"/>
        <end position="299"/>
    </location>
</feature>
<feature type="domain" description="Ig-like C2-type 4">
    <location>
        <begin position="327"/>
        <end position="381"/>
    </location>
</feature>
<feature type="domain" description="Ig-like C2-type 5">
    <location>
        <begin position="415"/>
        <end position="468"/>
    </location>
</feature>
<feature type="short sequence motif" description="Cell attachment site; atypical" evidence="3">
    <location>
        <begin position="151"/>
        <end position="153"/>
    </location>
</feature>
<feature type="short sequence motif" description="Cell attachment site" evidence="3">
    <location>
        <begin position="179"/>
        <end position="181"/>
    </location>
</feature>
<feature type="site" description="Not glycosylated" evidence="5">
    <location>
        <position position="469"/>
    </location>
</feature>
<feature type="site" description="Not glycosylated" evidence="5">
    <location>
        <position position="485"/>
    </location>
</feature>
<feature type="glycosylation site" description="N-linked (GlcNAc...) asparagine" evidence="5">
    <location>
        <position position="47"/>
    </location>
</feature>
<feature type="glycosylation site" description="N-linked (GlcNAc...) asparagine" evidence="5 6">
    <location>
        <position position="185"/>
    </location>
</feature>
<feature type="glycosylation site" description="N-linked (GlcNAc...) asparagine" evidence="5 6">
    <location>
        <position position="204"/>
    </location>
</feature>
<feature type="glycosylation site" description="N-linked (GlcNAc...) asparagine" evidence="5">
    <location>
        <position position="267"/>
    </location>
</feature>
<feature type="glycosylation site" description="N-linked (GlcNAc...) asparagine" evidence="5">
    <location>
        <position position="311"/>
    </location>
</feature>
<feature type="glycosylation site" description="N-linked (GlcNAc...) asparagine" evidence="5 6">
    <location>
        <position position="362"/>
    </location>
</feature>
<feature type="glycosylation site" description="N-linked (GlcNAc...) asparagine" evidence="5 6">
    <location>
        <position position="388"/>
    </location>
</feature>
<feature type="glycosylation site" description="N-linked (GlcNAc...) asparagine" evidence="5 6">
    <location>
        <position position="409"/>
    </location>
</feature>
<feature type="glycosylation site" description="N-linked (GlcNAc...) asparagine" evidence="5">
    <location>
        <position position="456"/>
    </location>
</feature>
<feature type="glycosylation site" description="N-linked (GlcNAc...) asparagine" evidence="6">
    <location>
        <position position="469"/>
    </location>
</feature>
<feature type="disulfide bond" evidence="4">
    <location>
        <begin position="48"/>
        <end position="91"/>
    </location>
</feature>
<feature type="disulfide bond" evidence="4">
    <location>
        <begin position="52"/>
        <end position="95"/>
    </location>
</feature>
<feature type="disulfide bond" evidence="4">
    <location>
        <begin position="134"/>
        <end position="188"/>
    </location>
</feature>
<feature type="disulfide bond" evidence="4">
    <location>
        <begin position="239"/>
        <end position="292"/>
    </location>
</feature>
<feature type="disulfide bond" evidence="4">
    <location>
        <begin position="334"/>
        <end position="374"/>
    </location>
</feature>
<feature type="disulfide bond" evidence="2">
    <location>
        <begin position="406"/>
        <end position="422"/>
    </location>
</feature>
<feature type="disulfide bond" evidence="4">
    <location>
        <begin position="422"/>
        <end position="461"/>
    </location>
</feature>
<feature type="disulfide bond" evidence="2">
    <location>
        <begin position="434"/>
        <end position="461"/>
    </location>
</feature>
<feature type="splice variant" id="VSP_002518" description="In isoform 2." evidence="8">
    <original>MASTRAKPTLPLLLALVTVVIPGPGDAQVSIHPR</original>
    <variation>MITHRHPVREKSINSYQFIKEKQFPAEN</variation>
    <location>
        <begin position="1"/>
        <end position="34"/>
    </location>
</feature>
<feature type="sequence conflict" description="In Ref. 3; AAA37876." evidence="8" ref="3">
    <original>G</original>
    <variation>A</variation>
    <location>
        <position position="243"/>
    </location>
</feature>
<feature type="sequence conflict" description="In Ref. 1; CAA34621." evidence="8" ref="1">
    <original>R</original>
    <variation>A</variation>
    <location>
        <position position="370"/>
    </location>
</feature>
<sequence length="537" mass="58844">MASTRAKPTLPLLLALVTVVIPGPGDAQVSIHPREAFLPQGGSVQVNCSSSCKEDLSLGLETQWLKDELESGPNWKLFELSEIGEDSSPLCFENCGTVQSSASATITVYSFPESVELRPLPAWQQVGKDLTLRCHVDGGAPRTQLSAVLLRGEEILSRQPVGGHPKDPKEITFTVLASRGDHGANFSCRTELDLRPQGLALFSNVSEARSLRTFDLPATIPKLDTPDLLEVGTQQKLFCSLEGLFPASEARIYLELGGQMPTQESTNSSDSVSATALVEVTEEFDRTLPLRCVLELADQILETQRTLTVYNFSAPVLTLSQLEVSEGSQVTVKCEAHSGSKVVLLSGVEPRPPTPQVQFTLNASSEDHKRSFFCSAALEVAGKFLFKNQTLELHVLYGPRLDETDCLGNWTWQEGSQQTLKCQAWGNPSPKMTCRRKADGALLPIGVVKSVKQEMNGTYVCHAFSSHGNVTRNVYLTVLYHSQNNWTIIILVPVLLVIVGLVMAASYVYNRQRKIRIYKLQKAQEEAIKLKGQAPPP</sequence>
<proteinExistence type="evidence at protein level"/>
<keyword id="KW-0025">Alternative splicing</keyword>
<keyword id="KW-0130">Cell adhesion</keyword>
<keyword id="KW-0903">Direct protein sequencing</keyword>
<keyword id="KW-1015">Disulfide bond</keyword>
<keyword id="KW-0325">Glycoprotein</keyword>
<keyword id="KW-0393">Immunoglobulin domain</keyword>
<keyword id="KW-0472">Membrane</keyword>
<keyword id="KW-1185">Reference proteome</keyword>
<keyword id="KW-0677">Repeat</keyword>
<keyword id="KW-0732">Signal</keyword>
<keyword id="KW-0812">Transmembrane</keyword>
<keyword id="KW-1133">Transmembrane helix</keyword>
<keyword id="KW-0832">Ubl conjugation</keyword>
<comment type="function">
    <text evidence="1">ICAM proteins are ligands for the leukocyte adhesion protein LFA-1 (integrin alpha-L/beta-2). During leukocyte trans-endothelial migration, ICAM1 engagement promotes the assembly of endothelial apical cups through ARHGEF26/SGEF and RHOG activation (By similarity).</text>
</comment>
<comment type="subunit">
    <text evidence="2">Homodimer. Interacts with MUC1 and promotes cell aggregation in epithelial cells. Interacts with ARHGEF26/SGEF. Interacts (on T cell side) with CD81, CD247 and CD9 at immunological synapses between antigen-presenting cells and T cells.</text>
</comment>
<comment type="subcellular location">
    <subcellularLocation>
        <location>Membrane</location>
        <topology>Single-pass type I membrane protein</topology>
    </subcellularLocation>
</comment>
<comment type="alternative products">
    <event type="alternative splicing"/>
    <isoform>
        <id>P13597-1</id>
        <name>1</name>
        <sequence type="displayed"/>
    </isoform>
    <isoform>
        <id>P13597-2</id>
        <name>2</name>
        <sequence type="described" ref="VSP_002518"/>
    </isoform>
</comment>
<comment type="tissue specificity">
    <text>Expressed at low level on a subpopulation of lymphocytes, macrophages, and endothelial cells, but is strongly induced on these cells, and on fibroblasts and epithelial cells.</text>
</comment>
<comment type="PTM">
    <text evidence="1">Monoubiquitinated, which is promoted by MARCH9 and leads to endocytosis.</text>
</comment>
<comment type="disruption phenotype">
    <text evidence="7">Spontaneous onset of obesity in 16-week old mice with higher levels of white and brown fat and a slightly heavier liver. Enhanced susceptibility to high fat diet-induced obesity characterized by a weight increase and higher levels of white and brown fat.</text>
</comment>
<comment type="similarity">
    <text evidence="8">Belongs to the immunoglobulin superfamily. ICAM family.</text>
</comment>
<comment type="online information" name="Functional Glycomics Gateway - Glycan Binding">
    <link uri="http://www.functionalglycomics.org/glycomics/GBPServlet?&amp;operationType=view&amp;cbpId=cbp_mou_Itlect_288"/>
    <text>ICAM-1</text>
</comment>